<feature type="chain" id="PRO_1000062241" description="Rhamnulose-1-phosphate aldolase">
    <location>
        <begin position="1"/>
        <end position="274"/>
    </location>
</feature>
<feature type="active site" evidence="1">
    <location>
        <position position="117"/>
    </location>
</feature>
<feature type="binding site" evidence="1">
    <location>
        <position position="141"/>
    </location>
    <ligand>
        <name>Zn(2+)</name>
        <dbReference type="ChEBI" id="CHEBI:29105"/>
    </ligand>
</feature>
<feature type="binding site" evidence="1">
    <location>
        <position position="143"/>
    </location>
    <ligand>
        <name>Zn(2+)</name>
        <dbReference type="ChEBI" id="CHEBI:29105"/>
    </ligand>
</feature>
<feature type="binding site" evidence="1">
    <location>
        <position position="212"/>
    </location>
    <ligand>
        <name>Zn(2+)</name>
        <dbReference type="ChEBI" id="CHEBI:29105"/>
    </ligand>
</feature>
<keyword id="KW-0963">Cytoplasm</keyword>
<keyword id="KW-0456">Lyase</keyword>
<keyword id="KW-0479">Metal-binding</keyword>
<keyword id="KW-0684">Rhamnose metabolism</keyword>
<keyword id="KW-0862">Zinc</keyword>
<reference key="1">
    <citation type="journal article" date="2007" name="PLoS Genet.">
        <title>The complete genome sequence of Yersinia pseudotuberculosis IP31758, the causative agent of Far East scarlet-like fever.</title>
        <authorList>
            <person name="Eppinger M."/>
            <person name="Rosovitz M.J."/>
            <person name="Fricke W.F."/>
            <person name="Rasko D.A."/>
            <person name="Kokorina G."/>
            <person name="Fayolle C."/>
            <person name="Lindler L.E."/>
            <person name="Carniel E."/>
            <person name="Ravel J."/>
        </authorList>
    </citation>
    <scope>NUCLEOTIDE SEQUENCE [LARGE SCALE GENOMIC DNA]</scope>
    <source>
        <strain>IP 31758</strain>
    </source>
</reference>
<dbReference type="EC" id="4.1.2.19" evidence="1"/>
<dbReference type="EMBL" id="CP000720">
    <property type="protein sequence ID" value="ABS47109.1"/>
    <property type="molecule type" value="Genomic_DNA"/>
</dbReference>
<dbReference type="RefSeq" id="WP_011191600.1">
    <property type="nucleotide sequence ID" value="NC_009708.1"/>
</dbReference>
<dbReference type="SMR" id="A7FN83"/>
<dbReference type="KEGG" id="ypi:YpsIP31758_3757"/>
<dbReference type="HOGENOM" id="CLU_076831_0_0_6"/>
<dbReference type="UniPathway" id="UPA00541">
    <property type="reaction ID" value="UER00603"/>
</dbReference>
<dbReference type="Proteomes" id="UP000002412">
    <property type="component" value="Chromosome"/>
</dbReference>
<dbReference type="GO" id="GO:0005829">
    <property type="term" value="C:cytosol"/>
    <property type="evidence" value="ECO:0007669"/>
    <property type="project" value="TreeGrafter"/>
</dbReference>
<dbReference type="GO" id="GO:0046872">
    <property type="term" value="F:metal ion binding"/>
    <property type="evidence" value="ECO:0007669"/>
    <property type="project" value="UniProtKB-KW"/>
</dbReference>
<dbReference type="GO" id="GO:0008994">
    <property type="term" value="F:rhamnulose-1-phosphate aldolase activity"/>
    <property type="evidence" value="ECO:0007669"/>
    <property type="project" value="UniProtKB-UniRule"/>
</dbReference>
<dbReference type="GO" id="GO:0019323">
    <property type="term" value="P:pentose catabolic process"/>
    <property type="evidence" value="ECO:0007669"/>
    <property type="project" value="TreeGrafter"/>
</dbReference>
<dbReference type="GO" id="GO:0019301">
    <property type="term" value="P:rhamnose catabolic process"/>
    <property type="evidence" value="ECO:0007669"/>
    <property type="project" value="UniProtKB-UniRule"/>
</dbReference>
<dbReference type="CDD" id="cd00398">
    <property type="entry name" value="Aldolase_II"/>
    <property type="match status" value="1"/>
</dbReference>
<dbReference type="FunFam" id="3.40.225.10:FF:000006">
    <property type="entry name" value="Rhamnulose-1-phosphate aldolase"/>
    <property type="match status" value="1"/>
</dbReference>
<dbReference type="Gene3D" id="3.40.225.10">
    <property type="entry name" value="Class II aldolase/adducin N-terminal domain"/>
    <property type="match status" value="1"/>
</dbReference>
<dbReference type="HAMAP" id="MF_00770">
    <property type="entry name" value="RhaD"/>
    <property type="match status" value="1"/>
</dbReference>
<dbReference type="InterPro" id="IPR050197">
    <property type="entry name" value="Aldolase_class_II_sugar_metab"/>
</dbReference>
<dbReference type="InterPro" id="IPR001303">
    <property type="entry name" value="Aldolase_II/adducin_N"/>
</dbReference>
<dbReference type="InterPro" id="IPR036409">
    <property type="entry name" value="Aldolase_II/adducin_N_sf"/>
</dbReference>
<dbReference type="InterPro" id="IPR013447">
    <property type="entry name" value="Rhamnulose-1-P_Aldolase"/>
</dbReference>
<dbReference type="NCBIfam" id="NF002963">
    <property type="entry name" value="PRK03634.1"/>
    <property type="match status" value="1"/>
</dbReference>
<dbReference type="NCBIfam" id="TIGR02624">
    <property type="entry name" value="rhamnu_1P_ald"/>
    <property type="match status" value="1"/>
</dbReference>
<dbReference type="PANTHER" id="PTHR22789">
    <property type="entry name" value="FUCULOSE PHOSPHATE ALDOLASE"/>
    <property type="match status" value="1"/>
</dbReference>
<dbReference type="PANTHER" id="PTHR22789:SF16">
    <property type="entry name" value="RHAMNULOSE-1-PHOSPHATE ALDOLASE"/>
    <property type="match status" value="1"/>
</dbReference>
<dbReference type="Pfam" id="PF00596">
    <property type="entry name" value="Aldolase_II"/>
    <property type="match status" value="1"/>
</dbReference>
<dbReference type="SMART" id="SM01007">
    <property type="entry name" value="Aldolase_II"/>
    <property type="match status" value="1"/>
</dbReference>
<dbReference type="SUPFAM" id="SSF53639">
    <property type="entry name" value="AraD/HMP-PK domain-like"/>
    <property type="match status" value="1"/>
</dbReference>
<proteinExistence type="inferred from homology"/>
<organism>
    <name type="scientific">Yersinia pseudotuberculosis serotype O:1b (strain IP 31758)</name>
    <dbReference type="NCBI Taxonomy" id="349747"/>
    <lineage>
        <taxon>Bacteria</taxon>
        <taxon>Pseudomonadati</taxon>
        <taxon>Pseudomonadota</taxon>
        <taxon>Gammaproteobacteria</taxon>
        <taxon>Enterobacterales</taxon>
        <taxon>Yersiniaceae</taxon>
        <taxon>Yersinia</taxon>
    </lineage>
</organism>
<evidence type="ECO:0000255" key="1">
    <source>
        <dbReference type="HAMAP-Rule" id="MF_00770"/>
    </source>
</evidence>
<accession>A7FN83</accession>
<gene>
    <name evidence="1" type="primary">rhaD</name>
    <name type="ordered locus">YpsIP31758_3757</name>
</gene>
<sequence length="274" mass="30330">MQAILSSWFIQGMIKATSDMWHKGWDERNGGNISLRLLAEEVEPYRRDFYQQPRKVELTQPAPELANSWFLVTGSGKFFRNVELNPAENLVLLQVSNDGMAYDIHWGLTQGGLPTSELAAHFQSHIVRMQVSGGTNRVIMHCHATNLIALSYVQKLENASFTRLLWEGSTECLVVFPDGIGIVPWMVPGTDGIGTQTAEQMREHSLVLWPFHGIFGSGPTLDDAFGLIDTAEKSAEIMVKVLSMGGKKQTISREQLIALAARFDVTPMAAALDA</sequence>
<protein>
    <recommendedName>
        <fullName evidence="1">Rhamnulose-1-phosphate aldolase</fullName>
        <ecNumber evidence="1">4.1.2.19</ecNumber>
    </recommendedName>
</protein>
<name>RHAD_YERP3</name>
<comment type="function">
    <text evidence="1">Catalyzes the reversible cleavage of L-rhamnulose-1-phosphate to dihydroxyacetone phosphate (DHAP) and L-lactaldehyde.</text>
</comment>
<comment type="catalytic activity">
    <reaction evidence="1">
        <text>L-rhamnulose 1-phosphate = (S)-lactaldehyde + dihydroxyacetone phosphate</text>
        <dbReference type="Rhea" id="RHEA:19689"/>
        <dbReference type="ChEBI" id="CHEBI:18041"/>
        <dbReference type="ChEBI" id="CHEBI:57642"/>
        <dbReference type="ChEBI" id="CHEBI:58313"/>
        <dbReference type="EC" id="4.1.2.19"/>
    </reaction>
</comment>
<comment type="cofactor">
    <cofactor evidence="1">
        <name>Zn(2+)</name>
        <dbReference type="ChEBI" id="CHEBI:29105"/>
    </cofactor>
    <text evidence="1">Binds 1 zinc ion per subunit.</text>
</comment>
<comment type="pathway">
    <text evidence="1">Carbohydrate degradation; L-rhamnose degradation; glycerone phosphate from L-rhamnose: step 3/3.</text>
</comment>
<comment type="subunit">
    <text evidence="1">Homotetramer.</text>
</comment>
<comment type="subcellular location">
    <subcellularLocation>
        <location evidence="1">Cytoplasm</location>
    </subcellularLocation>
</comment>
<comment type="similarity">
    <text evidence="1">Belongs to the aldolase class II family. RhaD subfamily.</text>
</comment>